<organism>
    <name type="scientific">Synechococcus sp. (strain CC9605)</name>
    <dbReference type="NCBI Taxonomy" id="110662"/>
    <lineage>
        <taxon>Bacteria</taxon>
        <taxon>Bacillati</taxon>
        <taxon>Cyanobacteriota</taxon>
        <taxon>Cyanophyceae</taxon>
        <taxon>Synechococcales</taxon>
        <taxon>Synechococcaceae</taxon>
        <taxon>Synechococcus</taxon>
    </lineage>
</organism>
<protein>
    <recommendedName>
        <fullName evidence="1">Cytochrome f</fullName>
    </recommendedName>
</protein>
<comment type="function">
    <text evidence="1">Component of the cytochrome b6-f complex, which mediates electron transfer between photosystem II (PSII) and photosystem I (PSI), cyclic electron flow around PSI, and state transitions.</text>
</comment>
<comment type="cofactor">
    <cofactor evidence="1">
        <name>heme</name>
        <dbReference type="ChEBI" id="CHEBI:30413"/>
    </cofactor>
    <text evidence="1">Binds 1 heme group covalently.</text>
</comment>
<comment type="subunit">
    <text evidence="1">The 4 large subunits of the cytochrome b6-f complex are cytochrome b6, subunit IV (17 kDa polypeptide, PetD), cytochrome f and the Rieske protein, while the 4 small subunits are PetG, PetL, PetM and PetN. The complex functions as a dimer.</text>
</comment>
<comment type="subcellular location">
    <subcellularLocation>
        <location evidence="1">Cellular thylakoid membrane</location>
        <topology evidence="1">Single-pass membrane protein</topology>
    </subcellularLocation>
</comment>
<comment type="similarity">
    <text evidence="1">Belongs to the cytochrome f family.</text>
</comment>
<comment type="sequence caution" evidence="2">
    <conflict type="erroneous initiation">
        <sequence resource="EMBL-CDS" id="ABB34401"/>
    </conflict>
</comment>
<reference key="1">
    <citation type="submission" date="2005-07" db="EMBL/GenBank/DDBJ databases">
        <title>Complete sequence of Synechococcus sp. CC9605.</title>
        <authorList>
            <consortium name="US DOE Joint Genome Institute"/>
            <person name="Copeland A."/>
            <person name="Lucas S."/>
            <person name="Lapidus A."/>
            <person name="Barry K."/>
            <person name="Detter J.C."/>
            <person name="Glavina T."/>
            <person name="Hammon N."/>
            <person name="Israni S."/>
            <person name="Pitluck S."/>
            <person name="Schmutz J."/>
            <person name="Martinez M."/>
            <person name="Larimer F."/>
            <person name="Land M."/>
            <person name="Kyrpides N."/>
            <person name="Ivanova N."/>
            <person name="Richardson P."/>
        </authorList>
    </citation>
    <scope>NUCLEOTIDE SEQUENCE [LARGE SCALE GENOMIC DNA]</scope>
    <source>
        <strain>CC9605</strain>
    </source>
</reference>
<proteinExistence type="inferred from homology"/>
<gene>
    <name evidence="1" type="primary">petA</name>
    <name type="ordered locus">Syncc9605_0627</name>
</gene>
<accession>Q3ALY1</accession>
<name>CYF_SYNSC</name>
<evidence type="ECO:0000255" key="1">
    <source>
        <dbReference type="HAMAP-Rule" id="MF_00610"/>
    </source>
</evidence>
<evidence type="ECO:0000305" key="2"/>
<feature type="signal peptide" evidence="1">
    <location>
        <begin position="1"/>
        <end position="27"/>
    </location>
</feature>
<feature type="chain" id="PRO_5000102252" description="Cytochrome f">
    <location>
        <begin position="28"/>
        <end position="310"/>
    </location>
</feature>
<feature type="transmembrane region" description="Helical" evidence="1">
    <location>
        <begin position="277"/>
        <end position="297"/>
    </location>
</feature>
<feature type="binding site" description="axial binding residue" evidence="1">
    <location>
        <position position="28"/>
    </location>
    <ligand>
        <name>heme</name>
        <dbReference type="ChEBI" id="CHEBI:30413"/>
    </ligand>
    <ligandPart>
        <name>Fe</name>
        <dbReference type="ChEBI" id="CHEBI:18248"/>
    </ligandPart>
</feature>
<feature type="binding site" description="covalent" evidence="1">
    <location>
        <position position="48"/>
    </location>
    <ligand>
        <name>heme</name>
        <dbReference type="ChEBI" id="CHEBI:30413"/>
    </ligand>
</feature>
<feature type="binding site" description="covalent" evidence="1">
    <location>
        <position position="51"/>
    </location>
    <ligand>
        <name>heme</name>
        <dbReference type="ChEBI" id="CHEBI:30413"/>
    </ligand>
</feature>
<feature type="binding site" description="axial binding residue" evidence="1">
    <location>
        <position position="52"/>
    </location>
    <ligand>
        <name>heme</name>
        <dbReference type="ChEBI" id="CHEBI:30413"/>
    </ligand>
    <ligandPart>
        <name>Fe</name>
        <dbReference type="ChEBI" id="CHEBI:18248"/>
    </ligandPart>
</feature>
<sequence length="310" mass="32882">MRRHLSLFLGSLVIGLALLIAPAASWAYPFWAQQNYDSPREATGKIVCANCHLAKKLTQAEVPQSVLPDSVFTASVRVPYENGLQEIGADGSDVGLQVGAVVMLPDGFTLAPQDRWTDEIKEETEGVYFTQYSDEQPNILLVGPIPGDEHQEIVFPVLSPDPATDSNIHFGKYQIHVGGNRGRGQVYPTGDKSNNTIYTAPASGTIASIEPGDNGASVVSIKAADGSSVSETIPVGPEVLVSVGDSIEAGTALTNDPNVGGFGQVDAEIVLQNPVRIYGLLAFFAAVALAQIMLVLKKRQIEKVQAAEGV</sequence>
<dbReference type="EMBL" id="CP000110">
    <property type="protein sequence ID" value="ABB34401.1"/>
    <property type="status" value="ALT_INIT"/>
    <property type="molecule type" value="Genomic_DNA"/>
</dbReference>
<dbReference type="RefSeq" id="WP_041434424.1">
    <property type="nucleotide sequence ID" value="NC_007516.1"/>
</dbReference>
<dbReference type="SMR" id="Q3ALY1"/>
<dbReference type="STRING" id="110662.Syncc9605_0627"/>
<dbReference type="KEGG" id="syd:Syncc9605_0627"/>
<dbReference type="eggNOG" id="COG0739">
    <property type="taxonomic scope" value="Bacteria"/>
</dbReference>
<dbReference type="HOGENOM" id="CLU_033498_0_0_3"/>
<dbReference type="OrthoDB" id="581091at2"/>
<dbReference type="GO" id="GO:0031676">
    <property type="term" value="C:plasma membrane-derived thylakoid membrane"/>
    <property type="evidence" value="ECO:0007669"/>
    <property type="project" value="UniProtKB-SubCell"/>
</dbReference>
<dbReference type="GO" id="GO:0009055">
    <property type="term" value="F:electron transfer activity"/>
    <property type="evidence" value="ECO:0007669"/>
    <property type="project" value="UniProtKB-UniRule"/>
</dbReference>
<dbReference type="GO" id="GO:0020037">
    <property type="term" value="F:heme binding"/>
    <property type="evidence" value="ECO:0007669"/>
    <property type="project" value="InterPro"/>
</dbReference>
<dbReference type="GO" id="GO:0005506">
    <property type="term" value="F:iron ion binding"/>
    <property type="evidence" value="ECO:0007669"/>
    <property type="project" value="InterPro"/>
</dbReference>
<dbReference type="GO" id="GO:0015979">
    <property type="term" value="P:photosynthesis"/>
    <property type="evidence" value="ECO:0007669"/>
    <property type="project" value="UniProtKB-UniRule"/>
</dbReference>
<dbReference type="FunFam" id="2.60.40.830:FF:000001">
    <property type="entry name" value="Cytochrome f"/>
    <property type="match status" value="1"/>
</dbReference>
<dbReference type="Gene3D" id="2.40.50.100">
    <property type="match status" value="1"/>
</dbReference>
<dbReference type="Gene3D" id="2.60.40.830">
    <property type="entry name" value="Cytochrome f large domain"/>
    <property type="match status" value="1"/>
</dbReference>
<dbReference type="Gene3D" id="1.20.5.700">
    <property type="entry name" value="Single helix bin"/>
    <property type="match status" value="1"/>
</dbReference>
<dbReference type="HAMAP" id="MF_00610">
    <property type="entry name" value="Cytb6_f_cytF"/>
    <property type="match status" value="1"/>
</dbReference>
<dbReference type="InterPro" id="IPR024058">
    <property type="entry name" value="Cyt-f_TM"/>
</dbReference>
<dbReference type="InterPro" id="IPR002325">
    <property type="entry name" value="Cyt_f"/>
</dbReference>
<dbReference type="InterPro" id="IPR024094">
    <property type="entry name" value="Cyt_f_lg_dom"/>
</dbReference>
<dbReference type="InterPro" id="IPR036826">
    <property type="entry name" value="Cyt_f_lg_dom_sf"/>
</dbReference>
<dbReference type="InterPro" id="IPR011054">
    <property type="entry name" value="Rudment_hybrid_motif"/>
</dbReference>
<dbReference type="NCBIfam" id="NF002736">
    <property type="entry name" value="PRK02693.1"/>
    <property type="match status" value="1"/>
</dbReference>
<dbReference type="PANTHER" id="PTHR33288">
    <property type="match status" value="1"/>
</dbReference>
<dbReference type="PANTHER" id="PTHR33288:SF10">
    <property type="entry name" value="CYTOCHROME F"/>
    <property type="match status" value="1"/>
</dbReference>
<dbReference type="Pfam" id="PF01333">
    <property type="entry name" value="Apocytochr_F_C"/>
    <property type="match status" value="1"/>
</dbReference>
<dbReference type="Pfam" id="PF16639">
    <property type="entry name" value="Apocytochr_F_N"/>
    <property type="match status" value="1"/>
</dbReference>
<dbReference type="PRINTS" id="PR00610">
    <property type="entry name" value="CYTOCHROMEF"/>
</dbReference>
<dbReference type="SUPFAM" id="SSF103431">
    <property type="entry name" value="Cytochrome f subunit of the cytochrome b6f complex, transmembrane anchor"/>
    <property type="match status" value="1"/>
</dbReference>
<dbReference type="SUPFAM" id="SSF49441">
    <property type="entry name" value="Cytochrome f, large domain"/>
    <property type="match status" value="1"/>
</dbReference>
<dbReference type="SUPFAM" id="SSF51246">
    <property type="entry name" value="Rudiment single hybrid motif"/>
    <property type="match status" value="1"/>
</dbReference>
<dbReference type="PROSITE" id="PS51010">
    <property type="entry name" value="CYTF"/>
    <property type="match status" value="1"/>
</dbReference>
<keyword id="KW-0249">Electron transport</keyword>
<keyword id="KW-0349">Heme</keyword>
<keyword id="KW-0408">Iron</keyword>
<keyword id="KW-0472">Membrane</keyword>
<keyword id="KW-0479">Metal-binding</keyword>
<keyword id="KW-0602">Photosynthesis</keyword>
<keyword id="KW-0732">Signal</keyword>
<keyword id="KW-0793">Thylakoid</keyword>
<keyword id="KW-0812">Transmembrane</keyword>
<keyword id="KW-1133">Transmembrane helix</keyword>
<keyword id="KW-0813">Transport</keyword>